<keyword id="KW-0249">Electron transport</keyword>
<keyword id="KW-0349">Heme</keyword>
<keyword id="KW-0408">Iron</keyword>
<keyword id="KW-0472">Membrane</keyword>
<keyword id="KW-0479">Metal-binding</keyword>
<keyword id="KW-0496">Mitochondrion</keyword>
<keyword id="KW-0999">Mitochondrion inner membrane</keyword>
<keyword id="KW-0679">Respiratory chain</keyword>
<keyword id="KW-0812">Transmembrane</keyword>
<keyword id="KW-1133">Transmembrane helix</keyword>
<keyword id="KW-0813">Transport</keyword>
<keyword id="KW-0830">Ubiquinone</keyword>
<proteinExistence type="inferred from homology"/>
<organism>
    <name type="scientific">Ctenomys maulinus</name>
    <name type="common">Maule tuco-tuco</name>
    <dbReference type="NCBI Taxonomy" id="108848"/>
    <lineage>
        <taxon>Eukaryota</taxon>
        <taxon>Metazoa</taxon>
        <taxon>Chordata</taxon>
        <taxon>Craniata</taxon>
        <taxon>Vertebrata</taxon>
        <taxon>Euteleostomi</taxon>
        <taxon>Mammalia</taxon>
        <taxon>Eutheria</taxon>
        <taxon>Euarchontoglires</taxon>
        <taxon>Glires</taxon>
        <taxon>Rodentia</taxon>
        <taxon>Hystricomorpha</taxon>
        <taxon>Ctenomyidae</taxon>
        <taxon>Ctenomys</taxon>
    </lineage>
</organism>
<geneLocation type="mitochondrion"/>
<reference key="1">
    <citation type="journal article" date="2001" name="Mol. Biol. Evol.">
        <title>Recurrent amplifications and deletions of satellite DNA accompanied chromosomal diversification in South American tuco-tucos (genus Ctenomys, Rodentia: Octodontidae): a phylogenetic approach.</title>
        <authorList>
            <person name="Slamovits C.H."/>
            <person name="Cook J.A."/>
            <person name="Lessa E.P."/>
            <person name="Rossi M.S."/>
        </authorList>
    </citation>
    <scope>NUCLEOTIDE SEQUENCE [GENOMIC DNA]</scope>
    <source>
        <strain>Isolate 1019</strain>
        <strain>Isolate MHG1151</strain>
    </source>
</reference>
<accession>Q94WW9</accession>
<accession>Q94WW8</accession>
<sequence>MTNTRKSHPLIKIMNHSFIDLPTPSNISAWWNFGSLLGVCLGLQILTGLFLAMHYTADTTTAFSSVTHICRDVNYGWLIRYMHANGASMFFIFLYFHIGRGIYYGSYTFMDTWNIGVLLLFAVMATAFMGYVLPWGQMSFWGATVITNLLSAIPYIGPTLVEWIWGGFSVDKATLTRFFAFHFILPFIITAMVMIHLLFLHETGSNNPSGMNSDSDKIPFHPYYTIKDILGVLFMMITLMSLVMFTPDLLGDPDNYTPANPLNTPPHIKPEWYFLFAYAILRSIPNKLGGVLALVFSILILMLFPILHSSKQRSMSFRPLSQCLMWVLVANLLILTWIGGQPVEHPFITIGQLASVTYFFTILILMPSTALMENKLLKW</sequence>
<evidence type="ECO:0000250" key="1"/>
<evidence type="ECO:0000250" key="2">
    <source>
        <dbReference type="UniProtKB" id="P00157"/>
    </source>
</evidence>
<evidence type="ECO:0000255" key="3">
    <source>
        <dbReference type="PROSITE-ProRule" id="PRU00967"/>
    </source>
</evidence>
<evidence type="ECO:0000255" key="4">
    <source>
        <dbReference type="PROSITE-ProRule" id="PRU00968"/>
    </source>
</evidence>
<dbReference type="EMBL" id="AF370702">
    <property type="protein sequence ID" value="AAL01866.1"/>
    <property type="molecule type" value="Genomic_DNA"/>
</dbReference>
<dbReference type="EMBL" id="AF370703">
    <property type="protein sequence ID" value="AAL01867.1"/>
    <property type="molecule type" value="Genomic_DNA"/>
</dbReference>
<dbReference type="SMR" id="Q94WW9"/>
<dbReference type="GO" id="GO:0005743">
    <property type="term" value="C:mitochondrial inner membrane"/>
    <property type="evidence" value="ECO:0007669"/>
    <property type="project" value="UniProtKB-SubCell"/>
</dbReference>
<dbReference type="GO" id="GO:0045275">
    <property type="term" value="C:respiratory chain complex III"/>
    <property type="evidence" value="ECO:0007669"/>
    <property type="project" value="InterPro"/>
</dbReference>
<dbReference type="GO" id="GO:0046872">
    <property type="term" value="F:metal ion binding"/>
    <property type="evidence" value="ECO:0007669"/>
    <property type="project" value="UniProtKB-KW"/>
</dbReference>
<dbReference type="GO" id="GO:0008121">
    <property type="term" value="F:ubiquinol-cytochrome-c reductase activity"/>
    <property type="evidence" value="ECO:0007669"/>
    <property type="project" value="InterPro"/>
</dbReference>
<dbReference type="GO" id="GO:0006122">
    <property type="term" value="P:mitochondrial electron transport, ubiquinol to cytochrome c"/>
    <property type="evidence" value="ECO:0007669"/>
    <property type="project" value="TreeGrafter"/>
</dbReference>
<dbReference type="CDD" id="cd00290">
    <property type="entry name" value="cytochrome_b_C"/>
    <property type="match status" value="1"/>
</dbReference>
<dbReference type="CDD" id="cd00284">
    <property type="entry name" value="Cytochrome_b_N"/>
    <property type="match status" value="1"/>
</dbReference>
<dbReference type="FunFam" id="1.20.810.10:FF:000002">
    <property type="entry name" value="Cytochrome b"/>
    <property type="match status" value="1"/>
</dbReference>
<dbReference type="Gene3D" id="1.20.810.10">
    <property type="entry name" value="Cytochrome Bc1 Complex, Chain C"/>
    <property type="match status" value="1"/>
</dbReference>
<dbReference type="InterPro" id="IPR005798">
    <property type="entry name" value="Cyt_b/b6_C"/>
</dbReference>
<dbReference type="InterPro" id="IPR036150">
    <property type="entry name" value="Cyt_b/b6_C_sf"/>
</dbReference>
<dbReference type="InterPro" id="IPR005797">
    <property type="entry name" value="Cyt_b/b6_N"/>
</dbReference>
<dbReference type="InterPro" id="IPR027387">
    <property type="entry name" value="Cytb/b6-like_sf"/>
</dbReference>
<dbReference type="InterPro" id="IPR030689">
    <property type="entry name" value="Cytochrome_b"/>
</dbReference>
<dbReference type="InterPro" id="IPR048260">
    <property type="entry name" value="Cytochrome_b_C_euk/bac"/>
</dbReference>
<dbReference type="InterPro" id="IPR048259">
    <property type="entry name" value="Cytochrome_b_N_euk/bac"/>
</dbReference>
<dbReference type="InterPro" id="IPR016174">
    <property type="entry name" value="Di-haem_cyt_TM"/>
</dbReference>
<dbReference type="PANTHER" id="PTHR19271">
    <property type="entry name" value="CYTOCHROME B"/>
    <property type="match status" value="1"/>
</dbReference>
<dbReference type="PANTHER" id="PTHR19271:SF16">
    <property type="entry name" value="CYTOCHROME B"/>
    <property type="match status" value="1"/>
</dbReference>
<dbReference type="Pfam" id="PF00032">
    <property type="entry name" value="Cytochrom_B_C"/>
    <property type="match status" value="1"/>
</dbReference>
<dbReference type="Pfam" id="PF00033">
    <property type="entry name" value="Cytochrome_B"/>
    <property type="match status" value="1"/>
</dbReference>
<dbReference type="PIRSF" id="PIRSF038885">
    <property type="entry name" value="COB"/>
    <property type="match status" value="1"/>
</dbReference>
<dbReference type="SUPFAM" id="SSF81648">
    <property type="entry name" value="a domain/subunit of cytochrome bc1 complex (Ubiquinol-cytochrome c reductase)"/>
    <property type="match status" value="1"/>
</dbReference>
<dbReference type="SUPFAM" id="SSF81342">
    <property type="entry name" value="Transmembrane di-heme cytochromes"/>
    <property type="match status" value="1"/>
</dbReference>
<dbReference type="PROSITE" id="PS51003">
    <property type="entry name" value="CYTB_CTER"/>
    <property type="match status" value="1"/>
</dbReference>
<dbReference type="PROSITE" id="PS51002">
    <property type="entry name" value="CYTB_NTER"/>
    <property type="match status" value="1"/>
</dbReference>
<protein>
    <recommendedName>
        <fullName>Cytochrome b</fullName>
    </recommendedName>
    <alternativeName>
        <fullName>Complex III subunit 3</fullName>
    </alternativeName>
    <alternativeName>
        <fullName>Complex III subunit III</fullName>
    </alternativeName>
    <alternativeName>
        <fullName>Cytochrome b-c1 complex subunit 3</fullName>
    </alternativeName>
    <alternativeName>
        <fullName>Ubiquinol-cytochrome-c reductase complex cytochrome b subunit</fullName>
    </alternativeName>
</protein>
<feature type="chain" id="PRO_0000255025" description="Cytochrome b">
    <location>
        <begin position="1"/>
        <end position="379"/>
    </location>
</feature>
<feature type="transmembrane region" description="Helical" evidence="2">
    <location>
        <begin position="33"/>
        <end position="53"/>
    </location>
</feature>
<feature type="transmembrane region" description="Helical" evidence="2">
    <location>
        <begin position="77"/>
        <end position="98"/>
    </location>
</feature>
<feature type="transmembrane region" description="Helical" evidence="2">
    <location>
        <begin position="113"/>
        <end position="133"/>
    </location>
</feature>
<feature type="transmembrane region" description="Helical" evidence="2">
    <location>
        <begin position="178"/>
        <end position="198"/>
    </location>
</feature>
<feature type="transmembrane region" description="Helical" evidence="2">
    <location>
        <begin position="226"/>
        <end position="246"/>
    </location>
</feature>
<feature type="transmembrane region" description="Helical" evidence="2">
    <location>
        <begin position="288"/>
        <end position="308"/>
    </location>
</feature>
<feature type="transmembrane region" description="Helical" evidence="2">
    <location>
        <begin position="320"/>
        <end position="340"/>
    </location>
</feature>
<feature type="transmembrane region" description="Helical" evidence="2">
    <location>
        <begin position="347"/>
        <end position="367"/>
    </location>
</feature>
<feature type="binding site" description="axial binding residue" evidence="2">
    <location>
        <position position="83"/>
    </location>
    <ligand>
        <name>heme b</name>
        <dbReference type="ChEBI" id="CHEBI:60344"/>
        <label>b562</label>
    </ligand>
    <ligandPart>
        <name>Fe</name>
        <dbReference type="ChEBI" id="CHEBI:18248"/>
    </ligandPart>
</feature>
<feature type="binding site" description="axial binding residue" evidence="2">
    <location>
        <position position="97"/>
    </location>
    <ligand>
        <name>heme b</name>
        <dbReference type="ChEBI" id="CHEBI:60344"/>
        <label>b566</label>
    </ligand>
    <ligandPart>
        <name>Fe</name>
        <dbReference type="ChEBI" id="CHEBI:18248"/>
    </ligandPart>
</feature>
<feature type="binding site" description="axial binding residue" evidence="2">
    <location>
        <position position="182"/>
    </location>
    <ligand>
        <name>heme b</name>
        <dbReference type="ChEBI" id="CHEBI:60344"/>
        <label>b562</label>
    </ligand>
    <ligandPart>
        <name>Fe</name>
        <dbReference type="ChEBI" id="CHEBI:18248"/>
    </ligandPart>
</feature>
<feature type="binding site" description="axial binding residue" evidence="2">
    <location>
        <position position="196"/>
    </location>
    <ligand>
        <name>heme b</name>
        <dbReference type="ChEBI" id="CHEBI:60344"/>
        <label>b566</label>
    </ligand>
    <ligandPart>
        <name>Fe</name>
        <dbReference type="ChEBI" id="CHEBI:18248"/>
    </ligandPart>
</feature>
<feature type="binding site" evidence="2">
    <location>
        <position position="201"/>
    </location>
    <ligand>
        <name>a ubiquinone</name>
        <dbReference type="ChEBI" id="CHEBI:16389"/>
    </ligand>
</feature>
<feature type="sequence variant" description="In strain: Isolate 1019.">
    <original>T</original>
    <variation>A</variation>
    <location>
        <position position="23"/>
    </location>
</feature>
<feature type="sequence variant" description="In strain: Isolate 1019.">
    <original>SL</original>
    <variation>GV</variation>
    <location>
        <begin position="241"/>
        <end position="242"/>
    </location>
</feature>
<feature type="sequence variant" description="In strain: Isolate 1019.">
    <original>N</original>
    <variation>K</variation>
    <location>
        <position position="255"/>
    </location>
</feature>
<feature type="sequence variant" description="In strain: Isolate 1019.">
    <original>V</original>
    <variation>M</variation>
    <location>
        <position position="327"/>
    </location>
</feature>
<gene>
    <name type="primary">MT-CYB</name>
    <name type="synonym">COB</name>
    <name type="synonym">CYTB</name>
    <name type="synonym">MTCYB</name>
</gene>
<comment type="function">
    <text evidence="2">Component of the ubiquinol-cytochrome c reductase complex (complex III or cytochrome b-c1 complex) that is part of the mitochondrial respiratory chain. The b-c1 complex mediates electron transfer from ubiquinol to cytochrome c. Contributes to the generation of a proton gradient across the mitochondrial membrane that is then used for ATP synthesis.</text>
</comment>
<comment type="cofactor">
    <cofactor evidence="2">
        <name>heme b</name>
        <dbReference type="ChEBI" id="CHEBI:60344"/>
    </cofactor>
    <text evidence="2">Binds 2 heme b groups non-covalently.</text>
</comment>
<comment type="subunit">
    <text evidence="2">The cytochrome bc1 complex contains 11 subunits: 3 respiratory subunits (MT-CYB, CYC1 and UQCRFS1), 2 core proteins (UQCRC1 and UQCRC2) and 6 low-molecular weight proteins (UQCRH/QCR6, UQCRB/QCR7, UQCRQ/QCR8, UQCR10/QCR9, UQCR11/QCR10 and a cleavage product of UQCRFS1). This cytochrome bc1 complex then forms a dimer.</text>
</comment>
<comment type="subcellular location">
    <subcellularLocation>
        <location evidence="2">Mitochondrion inner membrane</location>
        <topology evidence="2">Multi-pass membrane protein</topology>
    </subcellularLocation>
</comment>
<comment type="miscellaneous">
    <text evidence="1">Heme 1 (or BL or b562) is low-potential and absorbs at about 562 nm, and heme 2 (or BH or b566) is high-potential and absorbs at about 566 nm.</text>
</comment>
<comment type="similarity">
    <text evidence="3 4">Belongs to the cytochrome b family.</text>
</comment>
<comment type="caution">
    <text evidence="2">The full-length protein contains only eight transmembrane helices, not nine as predicted by bioinformatics tools.</text>
</comment>
<name>CYB_CTEMU</name>